<name>SYFA_HAEDU</name>
<protein>
    <recommendedName>
        <fullName evidence="1">Phenylalanine--tRNA ligase alpha subunit</fullName>
        <ecNumber evidence="1">6.1.1.20</ecNumber>
    </recommendedName>
    <alternativeName>
        <fullName evidence="1">Phenylalanyl-tRNA synthetase alpha subunit</fullName>
        <shortName evidence="1">PheRS</shortName>
    </alternativeName>
</protein>
<organism>
    <name type="scientific">Haemophilus ducreyi (strain 35000HP / ATCC 700724)</name>
    <dbReference type="NCBI Taxonomy" id="233412"/>
    <lineage>
        <taxon>Bacteria</taxon>
        <taxon>Pseudomonadati</taxon>
        <taxon>Pseudomonadota</taxon>
        <taxon>Gammaproteobacteria</taxon>
        <taxon>Pasteurellales</taxon>
        <taxon>Pasteurellaceae</taxon>
        <taxon>Haemophilus</taxon>
    </lineage>
</organism>
<proteinExistence type="inferred from homology"/>
<comment type="catalytic activity">
    <reaction evidence="1">
        <text>tRNA(Phe) + L-phenylalanine + ATP = L-phenylalanyl-tRNA(Phe) + AMP + diphosphate + H(+)</text>
        <dbReference type="Rhea" id="RHEA:19413"/>
        <dbReference type="Rhea" id="RHEA-COMP:9668"/>
        <dbReference type="Rhea" id="RHEA-COMP:9699"/>
        <dbReference type="ChEBI" id="CHEBI:15378"/>
        <dbReference type="ChEBI" id="CHEBI:30616"/>
        <dbReference type="ChEBI" id="CHEBI:33019"/>
        <dbReference type="ChEBI" id="CHEBI:58095"/>
        <dbReference type="ChEBI" id="CHEBI:78442"/>
        <dbReference type="ChEBI" id="CHEBI:78531"/>
        <dbReference type="ChEBI" id="CHEBI:456215"/>
        <dbReference type="EC" id="6.1.1.20"/>
    </reaction>
</comment>
<comment type="cofactor">
    <cofactor evidence="1">
        <name>Mg(2+)</name>
        <dbReference type="ChEBI" id="CHEBI:18420"/>
    </cofactor>
    <text evidence="1">Binds 2 magnesium ions per tetramer.</text>
</comment>
<comment type="subunit">
    <text evidence="1">Tetramer of two alpha and two beta subunits.</text>
</comment>
<comment type="subcellular location">
    <subcellularLocation>
        <location evidence="1">Cytoplasm</location>
    </subcellularLocation>
</comment>
<comment type="similarity">
    <text evidence="1">Belongs to the class-II aminoacyl-tRNA synthetase family. Phe-tRNA synthetase alpha subunit type 1 subfamily.</text>
</comment>
<keyword id="KW-0030">Aminoacyl-tRNA synthetase</keyword>
<keyword id="KW-0067">ATP-binding</keyword>
<keyword id="KW-0963">Cytoplasm</keyword>
<keyword id="KW-0436">Ligase</keyword>
<keyword id="KW-0460">Magnesium</keyword>
<keyword id="KW-0479">Metal-binding</keyword>
<keyword id="KW-0547">Nucleotide-binding</keyword>
<keyword id="KW-0648">Protein biosynthesis</keyword>
<keyword id="KW-1185">Reference proteome</keyword>
<dbReference type="EC" id="6.1.1.20" evidence="1"/>
<dbReference type="EMBL" id="AE017143">
    <property type="protein sequence ID" value="AAP96286.1"/>
    <property type="molecule type" value="Genomic_DNA"/>
</dbReference>
<dbReference type="RefSeq" id="WP_010945331.1">
    <property type="nucleotide sequence ID" value="NC_002940.2"/>
</dbReference>
<dbReference type="SMR" id="Q7VLG2"/>
<dbReference type="STRING" id="233412.HD_1484"/>
<dbReference type="KEGG" id="hdu:HD_1484"/>
<dbReference type="eggNOG" id="COG0016">
    <property type="taxonomic scope" value="Bacteria"/>
</dbReference>
<dbReference type="HOGENOM" id="CLU_025086_0_1_6"/>
<dbReference type="OrthoDB" id="9800719at2"/>
<dbReference type="Proteomes" id="UP000001022">
    <property type="component" value="Chromosome"/>
</dbReference>
<dbReference type="GO" id="GO:0005737">
    <property type="term" value="C:cytoplasm"/>
    <property type="evidence" value="ECO:0007669"/>
    <property type="project" value="UniProtKB-SubCell"/>
</dbReference>
<dbReference type="GO" id="GO:0005524">
    <property type="term" value="F:ATP binding"/>
    <property type="evidence" value="ECO:0007669"/>
    <property type="project" value="UniProtKB-UniRule"/>
</dbReference>
<dbReference type="GO" id="GO:0000287">
    <property type="term" value="F:magnesium ion binding"/>
    <property type="evidence" value="ECO:0007669"/>
    <property type="project" value="UniProtKB-UniRule"/>
</dbReference>
<dbReference type="GO" id="GO:0004826">
    <property type="term" value="F:phenylalanine-tRNA ligase activity"/>
    <property type="evidence" value="ECO:0007669"/>
    <property type="project" value="UniProtKB-UniRule"/>
</dbReference>
<dbReference type="GO" id="GO:0000049">
    <property type="term" value="F:tRNA binding"/>
    <property type="evidence" value="ECO:0007669"/>
    <property type="project" value="InterPro"/>
</dbReference>
<dbReference type="GO" id="GO:0006432">
    <property type="term" value="P:phenylalanyl-tRNA aminoacylation"/>
    <property type="evidence" value="ECO:0007669"/>
    <property type="project" value="UniProtKB-UniRule"/>
</dbReference>
<dbReference type="CDD" id="cd00496">
    <property type="entry name" value="PheRS_alpha_core"/>
    <property type="match status" value="1"/>
</dbReference>
<dbReference type="FunFam" id="3.30.930.10:FF:000003">
    <property type="entry name" value="Phenylalanine--tRNA ligase alpha subunit"/>
    <property type="match status" value="1"/>
</dbReference>
<dbReference type="Gene3D" id="3.30.930.10">
    <property type="entry name" value="Bira Bifunctional Protein, Domain 2"/>
    <property type="match status" value="1"/>
</dbReference>
<dbReference type="HAMAP" id="MF_00281">
    <property type="entry name" value="Phe_tRNA_synth_alpha1"/>
    <property type="match status" value="1"/>
</dbReference>
<dbReference type="InterPro" id="IPR006195">
    <property type="entry name" value="aa-tRNA-synth_II"/>
</dbReference>
<dbReference type="InterPro" id="IPR045864">
    <property type="entry name" value="aa-tRNA-synth_II/BPL/LPL"/>
</dbReference>
<dbReference type="InterPro" id="IPR004529">
    <property type="entry name" value="Phe-tRNA-synth_IIc_asu"/>
</dbReference>
<dbReference type="InterPro" id="IPR004188">
    <property type="entry name" value="Phe-tRNA_ligase_II_N"/>
</dbReference>
<dbReference type="InterPro" id="IPR022911">
    <property type="entry name" value="Phe_tRNA_ligase_alpha1_bac"/>
</dbReference>
<dbReference type="InterPro" id="IPR002319">
    <property type="entry name" value="Phenylalanyl-tRNA_Synthase"/>
</dbReference>
<dbReference type="InterPro" id="IPR010978">
    <property type="entry name" value="tRNA-bd_arm"/>
</dbReference>
<dbReference type="NCBIfam" id="TIGR00468">
    <property type="entry name" value="pheS"/>
    <property type="match status" value="1"/>
</dbReference>
<dbReference type="PANTHER" id="PTHR11538:SF41">
    <property type="entry name" value="PHENYLALANINE--TRNA LIGASE, MITOCHONDRIAL"/>
    <property type="match status" value="1"/>
</dbReference>
<dbReference type="PANTHER" id="PTHR11538">
    <property type="entry name" value="PHENYLALANYL-TRNA SYNTHETASE"/>
    <property type="match status" value="1"/>
</dbReference>
<dbReference type="Pfam" id="PF02912">
    <property type="entry name" value="Phe_tRNA-synt_N"/>
    <property type="match status" value="1"/>
</dbReference>
<dbReference type="Pfam" id="PF01409">
    <property type="entry name" value="tRNA-synt_2d"/>
    <property type="match status" value="1"/>
</dbReference>
<dbReference type="SUPFAM" id="SSF55681">
    <property type="entry name" value="Class II aaRS and biotin synthetases"/>
    <property type="match status" value="1"/>
</dbReference>
<dbReference type="SUPFAM" id="SSF46589">
    <property type="entry name" value="tRNA-binding arm"/>
    <property type="match status" value="1"/>
</dbReference>
<dbReference type="PROSITE" id="PS50862">
    <property type="entry name" value="AA_TRNA_LIGASE_II"/>
    <property type="match status" value="1"/>
</dbReference>
<feature type="chain" id="PRO_0000126711" description="Phenylalanine--tRNA ligase alpha subunit">
    <location>
        <begin position="1"/>
        <end position="327"/>
    </location>
</feature>
<feature type="binding site" evidence="1">
    <location>
        <position position="252"/>
    </location>
    <ligand>
        <name>Mg(2+)</name>
        <dbReference type="ChEBI" id="CHEBI:18420"/>
        <note>shared with beta subunit</note>
    </ligand>
</feature>
<accession>Q7VLG2</accession>
<sequence>MQHLDKLVAQVLESINTATDVATLETLKVEFFGKKGHFTQLMQGLRDIPAEQRPAVGQKINDAKQIAQNALNQKKEALENTELNEKLAKESIDVSLPGRKSALGGLHPVSITIDRVVKFFSELGFTVANGPEIESDYYNFDALNIPTHHPARADHDTFWFDAQRLLRTQTSGVQIRTMQTTQPPIRIVAPGRVYRNDYDQTHTPMFHQIELLYIDKKANFTELKGLIHDFLKAFFEEDLQVRFRPSFFPFTEPSAEVDVMRQNGKWLEVLGCGMVHPNVLRNVGIDPEEYSGFAVGMGVERLTMLRYNVTDLRAFFENDLRFLKQFR</sequence>
<reference key="1">
    <citation type="submission" date="2003-06" db="EMBL/GenBank/DDBJ databases">
        <title>The complete genome sequence of Haemophilus ducreyi.</title>
        <authorList>
            <person name="Munson R.S. Jr."/>
            <person name="Ray W.C."/>
            <person name="Mahairas G."/>
            <person name="Sabo P."/>
            <person name="Mungur R."/>
            <person name="Johnson L."/>
            <person name="Nguyen D."/>
            <person name="Wang J."/>
            <person name="Forst C."/>
            <person name="Hood L."/>
        </authorList>
    </citation>
    <scope>NUCLEOTIDE SEQUENCE [LARGE SCALE GENOMIC DNA]</scope>
    <source>
        <strain>35000HP / ATCC 700724</strain>
    </source>
</reference>
<gene>
    <name evidence="1" type="primary">pheS</name>
    <name type="ordered locus">HD_1484</name>
</gene>
<evidence type="ECO:0000255" key="1">
    <source>
        <dbReference type="HAMAP-Rule" id="MF_00281"/>
    </source>
</evidence>